<sequence length="351" mass="38575">MTEPKLATTHVVGEPTFEGLARFIERNNITKIFVMVGAGISVAAGIPDFRSPHTGLYAKLSRYNLNSPEDAFSLPLLRQQPSVFYNILMDMDLWPGKYCPTTVHHFISLLAKKGMLLCCCTQNIDGLERACGIPESLLVEAHGSFSSASCVDCHAKYDINMARAETRAGKVPHCNQCGGIVKPDVVFFGENLPEAFFNVAGLIEETELLLILGTSLQVHPFADLALMVPSDVPRVLFNLERVGGRMFRFPTDRTPNFRASSYRLSTGNGNGSKISSGDSSNSSSVDGYDQFTLAENDETGVLRDIFFPGDCQVSVRSFAQALGFGEQLDASVREGREIFERTRRREKVVEG</sequence>
<comment type="function">
    <text evidence="4 5">NAD-dependent protein deacetylase, which is involved in repression of RNA polymerase I-mediated expression immediately adjacent to telomeres. It is however not involved in antigenic variation and subtelomeric variant surface glycoprotein (VSG) gene silencing. Plays a role in DNA damage response. Also has ADP-ribosylation activity in vitro.</text>
</comment>
<comment type="catalytic activity">
    <reaction evidence="2">
        <text>N(6)-acetyl-L-lysyl-[protein] + NAD(+) + H2O = 2''-O-acetyl-ADP-D-ribose + nicotinamide + L-lysyl-[protein]</text>
        <dbReference type="Rhea" id="RHEA:43636"/>
        <dbReference type="Rhea" id="RHEA-COMP:9752"/>
        <dbReference type="Rhea" id="RHEA-COMP:10731"/>
        <dbReference type="ChEBI" id="CHEBI:15377"/>
        <dbReference type="ChEBI" id="CHEBI:17154"/>
        <dbReference type="ChEBI" id="CHEBI:29969"/>
        <dbReference type="ChEBI" id="CHEBI:57540"/>
        <dbReference type="ChEBI" id="CHEBI:61930"/>
        <dbReference type="ChEBI" id="CHEBI:83767"/>
        <dbReference type="EC" id="2.3.1.286"/>
    </reaction>
</comment>
<comment type="cofactor">
    <cofactor evidence="1">
        <name>Zn(2+)</name>
        <dbReference type="ChEBI" id="CHEBI:29105"/>
    </cofactor>
    <text evidence="1">Binds 1 zinc ion per subunit.</text>
</comment>
<comment type="interaction">
    <interactant intactId="EBI-7579996">
        <id>Q57V41</id>
    </interactant>
    <interactant intactId="EBI-932603">
        <id>Q02539</id>
        <label>H1-1</label>
    </interactant>
    <organismsDiffer>true</organismsDiffer>
    <experiments>2</experiments>
</comment>
<comment type="interaction">
    <interactant intactId="EBI-7579996">
        <id>Q57V41</id>
    </interactant>
    <interactant intactId="EBI-7580031">
        <id>P02253</id>
        <label>H1-2</label>
    </interactant>
    <organismsDiffer>true</organismsDiffer>
    <experiments>7</experiments>
</comment>
<comment type="subcellular location">
    <subcellularLocation>
        <location>Nucleus</location>
    </subcellularLocation>
    <subcellularLocation>
        <location>Chromosome</location>
        <location>Telomere</location>
    </subcellularLocation>
    <text>Co-localizes with telomeres and minichromosomes.</text>
</comment>
<comment type="similarity">
    <text evidence="6">Belongs to the sirtuin family. Class I subfamily.</text>
</comment>
<feature type="chain" id="PRO_0000417407" description="NAD-dependent protein deacetylase SIR2rp1">
    <location>
        <begin position="1"/>
        <end position="351"/>
    </location>
</feature>
<feature type="domain" description="Deacetylase sirtuin-type" evidence="2">
    <location>
        <begin position="10"/>
        <end position="325"/>
    </location>
</feature>
<feature type="region of interest" description="Disordered" evidence="3">
    <location>
        <begin position="260"/>
        <end position="284"/>
    </location>
</feature>
<feature type="compositionally biased region" description="Low complexity" evidence="3">
    <location>
        <begin position="265"/>
        <end position="284"/>
    </location>
</feature>
<feature type="active site" description="Proton acceptor" evidence="2">
    <location>
        <position position="142"/>
    </location>
</feature>
<feature type="binding site" evidence="1">
    <location>
        <begin position="37"/>
        <end position="57"/>
    </location>
    <ligand>
        <name>NAD(+)</name>
        <dbReference type="ChEBI" id="CHEBI:57540"/>
    </ligand>
</feature>
<feature type="binding site" evidence="1">
    <location>
        <begin position="122"/>
        <end position="125"/>
    </location>
    <ligand>
        <name>NAD(+)</name>
        <dbReference type="ChEBI" id="CHEBI:57540"/>
    </ligand>
</feature>
<feature type="binding site" evidence="2">
    <location>
        <position position="150"/>
    </location>
    <ligand>
        <name>Zn(2+)</name>
        <dbReference type="ChEBI" id="CHEBI:29105"/>
    </ligand>
</feature>
<feature type="binding site" evidence="2">
    <location>
        <position position="153"/>
    </location>
    <ligand>
        <name>Zn(2+)</name>
        <dbReference type="ChEBI" id="CHEBI:29105"/>
    </ligand>
</feature>
<feature type="binding site" evidence="2">
    <location>
        <position position="174"/>
    </location>
    <ligand>
        <name>Zn(2+)</name>
        <dbReference type="ChEBI" id="CHEBI:29105"/>
    </ligand>
</feature>
<feature type="binding site" evidence="2">
    <location>
        <position position="177"/>
    </location>
    <ligand>
        <name>Zn(2+)</name>
        <dbReference type="ChEBI" id="CHEBI:29105"/>
    </ligand>
</feature>
<feature type="binding site" evidence="1">
    <location>
        <begin position="213"/>
        <end position="215"/>
    </location>
    <ligand>
        <name>NAD(+)</name>
        <dbReference type="ChEBI" id="CHEBI:57540"/>
    </ligand>
</feature>
<feature type="binding site" evidence="1">
    <location>
        <begin position="238"/>
        <end position="240"/>
    </location>
    <ligand>
        <name>NAD(+)</name>
        <dbReference type="ChEBI" id="CHEBI:57540"/>
    </ligand>
</feature>
<feature type="binding site" evidence="1">
    <location>
        <position position="311"/>
    </location>
    <ligand>
        <name>NAD(+)</name>
        <dbReference type="ChEBI" id="CHEBI:57540"/>
    </ligand>
</feature>
<feature type="mutagenesis site" description="Abolishes enzyme activity." evidence="4">
    <original>H</original>
    <variation>Y</variation>
    <location>
        <position position="142"/>
    </location>
</feature>
<feature type="sequence conflict" description="In Ref. 1; AAC73004." evidence="6" ref="1">
    <original>M</original>
    <variation>I</variation>
    <location>
        <position position="161"/>
    </location>
</feature>
<feature type="sequence conflict" description="In Ref. 1; AAC73004." evidence="6" ref="1">
    <original>N</original>
    <variation>S</variation>
    <location>
        <position position="281"/>
    </location>
</feature>
<protein>
    <recommendedName>
        <fullName>NAD-dependent protein deacetylase SIR2rp1</fullName>
        <ecNumber evidence="2">2.3.1.286</ecNumber>
    </recommendedName>
    <alternativeName>
        <fullName>Regulatory protein SIR2 homolog 1</fullName>
    </alternativeName>
    <alternativeName>
        <fullName>SIR2-related protein 1</fullName>
    </alternativeName>
</protein>
<evidence type="ECO:0000250" key="1"/>
<evidence type="ECO:0000255" key="2">
    <source>
        <dbReference type="PROSITE-ProRule" id="PRU00236"/>
    </source>
</evidence>
<evidence type="ECO:0000256" key="3">
    <source>
        <dbReference type="SAM" id="MobiDB-lite"/>
    </source>
</evidence>
<evidence type="ECO:0000269" key="4">
    <source>
    </source>
</evidence>
<evidence type="ECO:0000269" key="5">
    <source>
    </source>
</evidence>
<evidence type="ECO:0000305" key="6"/>
<evidence type="ECO:0000312" key="7">
    <source>
        <dbReference type="Proteomes" id="UP000008524"/>
    </source>
</evidence>
<keyword id="KW-0158">Chromosome</keyword>
<keyword id="KW-0479">Metal-binding</keyword>
<keyword id="KW-0520">NAD</keyword>
<keyword id="KW-0539">Nucleus</keyword>
<keyword id="KW-1185">Reference proteome</keyword>
<keyword id="KW-0678">Repressor</keyword>
<keyword id="KW-0779">Telomere</keyword>
<keyword id="KW-0804">Transcription</keyword>
<keyword id="KW-0805">Transcription regulation</keyword>
<keyword id="KW-0808">Transferase</keyword>
<keyword id="KW-0862">Zinc</keyword>
<gene>
    <name type="primary">SIR2rp1</name>
    <name type="synonym">SIR2</name>
    <name type="ORF">Tb927.7.1690</name>
</gene>
<proteinExistence type="evidence at protein level"/>
<accession>Q57V41</accession>
<accession>D6XK87</accession>
<accession>O96670</accession>
<name>SIR2_TRYB2</name>
<organism>
    <name type="scientific">Trypanosoma brucei brucei (strain 927/4 GUTat10.1)</name>
    <dbReference type="NCBI Taxonomy" id="185431"/>
    <lineage>
        <taxon>Eukaryota</taxon>
        <taxon>Discoba</taxon>
        <taxon>Euglenozoa</taxon>
        <taxon>Kinetoplastea</taxon>
        <taxon>Metakinetoplastina</taxon>
        <taxon>Trypanosomatida</taxon>
        <taxon>Trypanosomatidae</taxon>
        <taxon>Trypanosoma</taxon>
    </lineage>
</organism>
<dbReference type="EC" id="2.3.1.286" evidence="2"/>
<dbReference type="EMBL" id="AF102869">
    <property type="protein sequence ID" value="AAC73004.1"/>
    <property type="molecule type" value="Genomic_DNA"/>
</dbReference>
<dbReference type="EMBL" id="AC159447">
    <property type="protein sequence ID" value="AAX70528.1"/>
    <property type="molecule type" value="Genomic_DNA"/>
</dbReference>
<dbReference type="EMBL" id="CP000070">
    <property type="protein sequence ID" value="AAZ12234.1"/>
    <property type="molecule type" value="Genomic_DNA"/>
</dbReference>
<dbReference type="RefSeq" id="XP_845793.1">
    <property type="nucleotide sequence ID" value="XM_840700.1"/>
</dbReference>
<dbReference type="SMR" id="Q57V41"/>
<dbReference type="FunCoup" id="Q57V41">
    <property type="interactions" value="140"/>
</dbReference>
<dbReference type="IntAct" id="Q57V41">
    <property type="interactions" value="2"/>
</dbReference>
<dbReference type="MINT" id="Q57V41"/>
<dbReference type="STRING" id="185431.Q57V41"/>
<dbReference type="PaxDb" id="5691-AAZ12234"/>
<dbReference type="GeneID" id="3658380"/>
<dbReference type="KEGG" id="tbr:Tb927.7.1690"/>
<dbReference type="VEuPathDB" id="TriTrypDB:Tb927.7.1690"/>
<dbReference type="eggNOG" id="KOG2682">
    <property type="taxonomic scope" value="Eukaryota"/>
</dbReference>
<dbReference type="InParanoid" id="Q57V41"/>
<dbReference type="OMA" id="YCQVPDC"/>
<dbReference type="OrthoDB" id="420264at2759"/>
<dbReference type="Proteomes" id="UP000008524">
    <property type="component" value="Chromosome 7"/>
</dbReference>
<dbReference type="GO" id="GO:0000781">
    <property type="term" value="C:chromosome, telomeric region"/>
    <property type="evidence" value="ECO:0007669"/>
    <property type="project" value="UniProtKB-SubCell"/>
</dbReference>
<dbReference type="GO" id="GO:0005737">
    <property type="term" value="C:cytoplasm"/>
    <property type="evidence" value="ECO:0000314"/>
    <property type="project" value="GeneDB"/>
</dbReference>
<dbReference type="GO" id="GO:0005829">
    <property type="term" value="C:cytosol"/>
    <property type="evidence" value="ECO:0000266"/>
    <property type="project" value="GeneDB"/>
</dbReference>
<dbReference type="GO" id="GO:0005634">
    <property type="term" value="C:nucleus"/>
    <property type="evidence" value="ECO:0000314"/>
    <property type="project" value="GeneDB"/>
</dbReference>
<dbReference type="GO" id="GO:0004407">
    <property type="term" value="F:histone deacetylase activity"/>
    <property type="evidence" value="ECO:0000314"/>
    <property type="project" value="GeneDB"/>
</dbReference>
<dbReference type="GO" id="GO:0017136">
    <property type="term" value="F:histone deacetylase activity, NAD-dependent"/>
    <property type="evidence" value="ECO:0000314"/>
    <property type="project" value="GeneDB"/>
</dbReference>
<dbReference type="GO" id="GO:0046872">
    <property type="term" value="F:metal ion binding"/>
    <property type="evidence" value="ECO:0007669"/>
    <property type="project" value="UniProtKB-KW"/>
</dbReference>
<dbReference type="GO" id="GO:0070403">
    <property type="term" value="F:NAD+ binding"/>
    <property type="evidence" value="ECO:0000318"/>
    <property type="project" value="GO_Central"/>
</dbReference>
<dbReference type="GO" id="GO:0003950">
    <property type="term" value="F:NAD+ poly-ADP-ribosyltransferase activity"/>
    <property type="evidence" value="ECO:0000314"/>
    <property type="project" value="GeneDB"/>
</dbReference>
<dbReference type="GO" id="GO:0006281">
    <property type="term" value="P:DNA repair"/>
    <property type="evidence" value="ECO:0000314"/>
    <property type="project" value="GeneDB"/>
</dbReference>
<dbReference type="GO" id="GO:0000183">
    <property type="term" value="P:rDNA heterochromatin formation"/>
    <property type="evidence" value="ECO:0000318"/>
    <property type="project" value="GO_Central"/>
</dbReference>
<dbReference type="Gene3D" id="3.30.1600.10">
    <property type="entry name" value="SIR2/SIRT2 'Small Domain"/>
    <property type="match status" value="1"/>
</dbReference>
<dbReference type="Gene3D" id="3.40.50.1220">
    <property type="entry name" value="TPP-binding domain"/>
    <property type="match status" value="1"/>
</dbReference>
<dbReference type="InterPro" id="IPR029035">
    <property type="entry name" value="DHS-like_NAD/FAD-binding_dom"/>
</dbReference>
<dbReference type="InterPro" id="IPR050134">
    <property type="entry name" value="NAD-dep_sirtuin_deacylases"/>
</dbReference>
<dbReference type="InterPro" id="IPR003000">
    <property type="entry name" value="Sirtuin"/>
</dbReference>
<dbReference type="InterPro" id="IPR026591">
    <property type="entry name" value="Sirtuin_cat_small_dom_sf"/>
</dbReference>
<dbReference type="InterPro" id="IPR017328">
    <property type="entry name" value="Sirtuin_class_I"/>
</dbReference>
<dbReference type="InterPro" id="IPR026590">
    <property type="entry name" value="Ssirtuin_cat_dom"/>
</dbReference>
<dbReference type="PANTHER" id="PTHR11085:SF6">
    <property type="entry name" value="NAD-DEPENDENT PROTEIN DEACETYLASE SIRTUIN-2"/>
    <property type="match status" value="1"/>
</dbReference>
<dbReference type="PANTHER" id="PTHR11085">
    <property type="entry name" value="NAD-DEPENDENT PROTEIN DEACYLASE SIRTUIN-5, MITOCHONDRIAL-RELATED"/>
    <property type="match status" value="1"/>
</dbReference>
<dbReference type="Pfam" id="PF02146">
    <property type="entry name" value="SIR2"/>
    <property type="match status" value="1"/>
</dbReference>
<dbReference type="PIRSF" id="PIRSF037938">
    <property type="entry name" value="SIR2_euk"/>
    <property type="match status" value="1"/>
</dbReference>
<dbReference type="SUPFAM" id="SSF52467">
    <property type="entry name" value="DHS-like NAD/FAD-binding domain"/>
    <property type="match status" value="1"/>
</dbReference>
<dbReference type="PROSITE" id="PS50305">
    <property type="entry name" value="SIRTUIN"/>
    <property type="match status" value="1"/>
</dbReference>
<reference key="1">
    <citation type="submission" date="1998-10" db="EMBL/GenBank/DDBJ databases">
        <title>Cloning of a Trypanosoma brucei Sir2 homolog.</title>
        <authorList>
            <person name="Hoek M."/>
            <person name="Wirtz E."/>
            <person name="Cross G.A.M."/>
        </authorList>
    </citation>
    <scope>NUCLEOTIDE SEQUENCE [GENOMIC DNA]</scope>
    <source>
        <strain evidence="7">927/4 GUTat10.1</strain>
    </source>
</reference>
<reference key="2">
    <citation type="journal article" date="2005" name="Science">
        <title>The genome of the African trypanosome Trypanosoma brucei.</title>
        <authorList>
            <person name="Berriman M."/>
            <person name="Ghedin E."/>
            <person name="Hertz-Fowler C."/>
            <person name="Blandin G."/>
            <person name="Renauld H."/>
            <person name="Bartholomeu D.C."/>
            <person name="Lennard N.J."/>
            <person name="Caler E."/>
            <person name="Hamlin N.E."/>
            <person name="Haas B."/>
            <person name="Bohme U."/>
            <person name="Hannick L."/>
            <person name="Aslett M.A."/>
            <person name="Shallom J."/>
            <person name="Marcello L."/>
            <person name="Hou L."/>
            <person name="Wickstead B."/>
            <person name="Alsmark U.C.M."/>
            <person name="Arrowsmith C."/>
            <person name="Atkin R.J."/>
            <person name="Barron A.J."/>
            <person name="Bringaud F."/>
            <person name="Brooks K."/>
            <person name="Carrington M."/>
            <person name="Cherevach I."/>
            <person name="Chillingworth T.J."/>
            <person name="Churcher C."/>
            <person name="Clark L.N."/>
            <person name="Corton C.H."/>
            <person name="Cronin A."/>
            <person name="Davies R.M."/>
            <person name="Doggett J."/>
            <person name="Djikeng A."/>
            <person name="Feldblyum T."/>
            <person name="Field M.C."/>
            <person name="Fraser A."/>
            <person name="Goodhead I."/>
            <person name="Hance Z."/>
            <person name="Harper D."/>
            <person name="Harris B.R."/>
            <person name="Hauser H."/>
            <person name="Hostetler J."/>
            <person name="Ivens A."/>
            <person name="Jagels K."/>
            <person name="Johnson D."/>
            <person name="Johnson J."/>
            <person name="Jones K."/>
            <person name="Kerhornou A.X."/>
            <person name="Koo H."/>
            <person name="Larke N."/>
            <person name="Landfear S."/>
            <person name="Larkin C."/>
            <person name="Leech V."/>
            <person name="Line A."/>
            <person name="Lord A."/>
            <person name="Macleod A."/>
            <person name="Mooney P.J."/>
            <person name="Moule S."/>
            <person name="Martin D.M."/>
            <person name="Morgan G.W."/>
            <person name="Mungall K."/>
            <person name="Norbertczak H."/>
            <person name="Ormond D."/>
            <person name="Pai G."/>
            <person name="Peacock C.S."/>
            <person name="Peterson J."/>
            <person name="Quail M.A."/>
            <person name="Rabbinowitsch E."/>
            <person name="Rajandream M.A."/>
            <person name="Reitter C."/>
            <person name="Salzberg S.L."/>
            <person name="Sanders M."/>
            <person name="Schobel S."/>
            <person name="Sharp S."/>
            <person name="Simmonds M."/>
            <person name="Simpson A.J."/>
            <person name="Tallon L."/>
            <person name="Turner C.M."/>
            <person name="Tait A."/>
            <person name="Tivey A.R."/>
            <person name="Van Aken S."/>
            <person name="Walker D."/>
            <person name="Wanless D."/>
            <person name="Wang S."/>
            <person name="White B."/>
            <person name="White O."/>
            <person name="Whitehead S."/>
            <person name="Woodward J."/>
            <person name="Wortman J."/>
            <person name="Adams M.D."/>
            <person name="Embley T.M."/>
            <person name="Gull K."/>
            <person name="Ullu E."/>
            <person name="Barry J.D."/>
            <person name="Fairlamb A.H."/>
            <person name="Opperdoes F."/>
            <person name="Barrell B.G."/>
            <person name="Donelson J.E."/>
            <person name="Hall N."/>
            <person name="Fraser C.M."/>
            <person name="Melville S.E."/>
            <person name="El-Sayed N.M.A."/>
        </authorList>
    </citation>
    <scope>NUCLEOTIDE SEQUENCE [LARGE SCALE GENOMIC DNA]</scope>
    <source>
        <strain>927/4 GUTat10.1</strain>
    </source>
</reference>
<reference key="3">
    <citation type="journal article" date="2003" name="EMBO J.">
        <title>A chromosomal SIR2 homologue with both histone NAD-dependent ADP-ribosyltransferase and deacetylase activities is involved in DNA repair in Trypanosoma brucei.</title>
        <authorList>
            <person name="Garcia-Salcedo J.A."/>
            <person name="Gijon P."/>
            <person name="Nolan D.P."/>
            <person name="Tebabi P."/>
            <person name="Pays E."/>
        </authorList>
    </citation>
    <scope>FUNCTION</scope>
    <scope>SUBCELLULAR LOCATION</scope>
    <scope>MUTAGENESIS OF HIS-142</scope>
</reference>
<reference key="4">
    <citation type="journal article" date="2007" name="Mol. Microbiol.">
        <title>A sirtuin in the African trypanosome is involved in both DNA repair and telomeric gene silencing but is not required for antigenic variation.</title>
        <authorList>
            <person name="Alsford S."/>
            <person name="Kawahara T."/>
            <person name="Isamah C."/>
            <person name="Horn D."/>
        </authorList>
    </citation>
    <scope>FUNCTION</scope>
    <scope>SUBCELLULAR LOCATION</scope>
</reference>